<gene>
    <name type="primary">katA</name>
    <name type="synonym">hktE</name>
    <name type="ordered locus">HI_0928</name>
</gene>
<accession>P44390</accession>
<reference key="1">
    <citation type="journal article" date="1994" name="J. Bacteriol.">
        <title>A peroxide/ascorbate-inducible catalase from Haemophilus influenzae is homologous to the Escherichia coli katE gene product.</title>
        <authorList>
            <person name="Bishai W.R."/>
            <person name="Smith H.O."/>
            <person name="Barcak G.J."/>
        </authorList>
    </citation>
    <scope>NUCLEOTIDE SEQUENCE [GENOMIC DNA]</scope>
    <source>
        <strain>ATCC 51907 / DSM 11121 / KW20 / Rd</strain>
    </source>
</reference>
<reference key="2">
    <citation type="journal article" date="1995" name="Science">
        <title>Whole-genome random sequencing and assembly of Haemophilus influenzae Rd.</title>
        <authorList>
            <person name="Fleischmann R.D."/>
            <person name="Adams M.D."/>
            <person name="White O."/>
            <person name="Clayton R.A."/>
            <person name="Kirkness E.F."/>
            <person name="Kerlavage A.R."/>
            <person name="Bult C.J."/>
            <person name="Tomb J.-F."/>
            <person name="Dougherty B.A."/>
            <person name="Merrick J.M."/>
            <person name="McKenney K."/>
            <person name="Sutton G.G."/>
            <person name="FitzHugh W."/>
            <person name="Fields C.A."/>
            <person name="Gocayne J.D."/>
            <person name="Scott J.D."/>
            <person name="Shirley R."/>
            <person name="Liu L.-I."/>
            <person name="Glodek A."/>
            <person name="Kelley J.M."/>
            <person name="Weidman J.F."/>
            <person name="Phillips C.A."/>
            <person name="Spriggs T."/>
            <person name="Hedblom E."/>
            <person name="Cotton M.D."/>
            <person name="Utterback T.R."/>
            <person name="Hanna M.C."/>
            <person name="Nguyen D.T."/>
            <person name="Saudek D.M."/>
            <person name="Brandon R.C."/>
            <person name="Fine L.D."/>
            <person name="Fritchman J.L."/>
            <person name="Fuhrmann J.L."/>
            <person name="Geoghagen N.S.M."/>
            <person name="Gnehm C.L."/>
            <person name="McDonald L.A."/>
            <person name="Small K.V."/>
            <person name="Fraser C.M."/>
            <person name="Smith H.O."/>
            <person name="Venter J.C."/>
        </authorList>
    </citation>
    <scope>NUCLEOTIDE SEQUENCE [LARGE SCALE GENOMIC DNA]</scope>
    <source>
        <strain>ATCC 51907 / DSM 11121 / KW20 / Rd</strain>
    </source>
</reference>
<protein>
    <recommendedName>
        <fullName>Catalase</fullName>
        <ecNumber>1.11.1.6</ecNumber>
    </recommendedName>
</protein>
<name>CATA_HAEIN</name>
<proteinExistence type="evidence at transcript level"/>
<evidence type="ECO:0000250" key="1"/>
<evidence type="ECO:0000255" key="2">
    <source>
        <dbReference type="PROSITE-ProRule" id="PRU10013"/>
    </source>
</evidence>
<evidence type="ECO:0000305" key="3"/>
<comment type="function">
    <text>Decomposes hydrogen peroxide into water and oxygen; serves to protect cells from the toxic effects of hydrogen peroxide.</text>
</comment>
<comment type="catalytic activity">
    <reaction evidence="2">
        <text>2 H2O2 = O2 + 2 H2O</text>
        <dbReference type="Rhea" id="RHEA:20309"/>
        <dbReference type="ChEBI" id="CHEBI:15377"/>
        <dbReference type="ChEBI" id="CHEBI:15379"/>
        <dbReference type="ChEBI" id="CHEBI:16240"/>
        <dbReference type="EC" id="1.11.1.6"/>
    </reaction>
</comment>
<comment type="cofactor">
    <cofactor>
        <name>heme</name>
        <dbReference type="ChEBI" id="CHEBI:30413"/>
    </cofactor>
</comment>
<comment type="subunit">
    <text evidence="1">Homohexamer.</text>
</comment>
<comment type="subcellular location">
    <subcellularLocation>
        <location evidence="3">Cytoplasm</location>
    </subcellularLocation>
</comment>
<comment type="induction">
    <text>By hydrogen peroxide.</text>
</comment>
<comment type="similarity">
    <text evidence="3">Belongs to the catalase family.</text>
</comment>
<organism>
    <name type="scientific">Haemophilus influenzae (strain ATCC 51907 / DSM 11121 / KW20 / Rd)</name>
    <dbReference type="NCBI Taxonomy" id="71421"/>
    <lineage>
        <taxon>Bacteria</taxon>
        <taxon>Pseudomonadati</taxon>
        <taxon>Pseudomonadota</taxon>
        <taxon>Gammaproteobacteria</taxon>
        <taxon>Pasteurellales</taxon>
        <taxon>Pasteurellaceae</taxon>
        <taxon>Haemophilus</taxon>
    </lineage>
</organism>
<keyword id="KW-0963">Cytoplasm</keyword>
<keyword id="KW-0349">Heme</keyword>
<keyword id="KW-0376">Hydrogen peroxide</keyword>
<keyword id="KW-0408">Iron</keyword>
<keyword id="KW-0479">Metal-binding</keyword>
<keyword id="KW-0560">Oxidoreductase</keyword>
<keyword id="KW-0575">Peroxidase</keyword>
<keyword id="KW-1185">Reference proteome</keyword>
<dbReference type="EC" id="1.11.1.6"/>
<dbReference type="EMBL" id="U02682">
    <property type="protein sequence ID" value="AAA20441.1"/>
    <property type="molecule type" value="Genomic_DNA"/>
</dbReference>
<dbReference type="EMBL" id="L42023">
    <property type="protein sequence ID" value="AAC22587.1"/>
    <property type="molecule type" value="Genomic_DNA"/>
</dbReference>
<dbReference type="PIR" id="D64103">
    <property type="entry name" value="D64103"/>
</dbReference>
<dbReference type="RefSeq" id="NP_439088.1">
    <property type="nucleotide sequence ID" value="NC_000907.1"/>
</dbReference>
<dbReference type="SMR" id="P44390"/>
<dbReference type="STRING" id="71421.HI_0928"/>
<dbReference type="EnsemblBacteria" id="AAC22587">
    <property type="protein sequence ID" value="AAC22587"/>
    <property type="gene ID" value="HI_0928"/>
</dbReference>
<dbReference type="KEGG" id="hin:HI_0928"/>
<dbReference type="PATRIC" id="fig|71421.8.peg.969"/>
<dbReference type="eggNOG" id="COG0753">
    <property type="taxonomic scope" value="Bacteria"/>
</dbReference>
<dbReference type="HOGENOM" id="CLU_010645_2_0_6"/>
<dbReference type="OrthoDB" id="9761719at2"/>
<dbReference type="PhylomeDB" id="P44390"/>
<dbReference type="BioCyc" id="HINF71421:G1GJ1-968-MONOMER"/>
<dbReference type="Proteomes" id="UP000000579">
    <property type="component" value="Chromosome"/>
</dbReference>
<dbReference type="GO" id="GO:0005737">
    <property type="term" value="C:cytoplasm"/>
    <property type="evidence" value="ECO:0000318"/>
    <property type="project" value="GO_Central"/>
</dbReference>
<dbReference type="GO" id="GO:0004096">
    <property type="term" value="F:catalase activity"/>
    <property type="evidence" value="ECO:0000318"/>
    <property type="project" value="GO_Central"/>
</dbReference>
<dbReference type="GO" id="GO:0020037">
    <property type="term" value="F:heme binding"/>
    <property type="evidence" value="ECO:0000318"/>
    <property type="project" value="GO_Central"/>
</dbReference>
<dbReference type="GO" id="GO:0046872">
    <property type="term" value="F:metal ion binding"/>
    <property type="evidence" value="ECO:0007669"/>
    <property type="project" value="UniProtKB-KW"/>
</dbReference>
<dbReference type="GO" id="GO:0042744">
    <property type="term" value="P:hydrogen peroxide catabolic process"/>
    <property type="evidence" value="ECO:0000318"/>
    <property type="project" value="GO_Central"/>
</dbReference>
<dbReference type="GO" id="GO:0042542">
    <property type="term" value="P:response to hydrogen peroxide"/>
    <property type="evidence" value="ECO:0000318"/>
    <property type="project" value="GO_Central"/>
</dbReference>
<dbReference type="CDD" id="cd08156">
    <property type="entry name" value="catalase_clade_3"/>
    <property type="match status" value="1"/>
</dbReference>
<dbReference type="FunFam" id="2.40.180.10:FF:000001">
    <property type="entry name" value="Catalase"/>
    <property type="match status" value="1"/>
</dbReference>
<dbReference type="Gene3D" id="2.40.180.10">
    <property type="entry name" value="Catalase core domain"/>
    <property type="match status" value="1"/>
</dbReference>
<dbReference type="InterPro" id="IPR018028">
    <property type="entry name" value="Catalase"/>
</dbReference>
<dbReference type="InterPro" id="IPR040333">
    <property type="entry name" value="Catalase_3"/>
</dbReference>
<dbReference type="InterPro" id="IPR024708">
    <property type="entry name" value="Catalase_AS"/>
</dbReference>
<dbReference type="InterPro" id="IPR024711">
    <property type="entry name" value="Catalase_clade1/3"/>
</dbReference>
<dbReference type="InterPro" id="IPR011614">
    <property type="entry name" value="Catalase_core"/>
</dbReference>
<dbReference type="InterPro" id="IPR002226">
    <property type="entry name" value="Catalase_haem_BS"/>
</dbReference>
<dbReference type="InterPro" id="IPR010582">
    <property type="entry name" value="Catalase_immune_responsive"/>
</dbReference>
<dbReference type="InterPro" id="IPR020835">
    <property type="entry name" value="Catalase_sf"/>
</dbReference>
<dbReference type="PANTHER" id="PTHR11465">
    <property type="entry name" value="CATALASE"/>
    <property type="match status" value="1"/>
</dbReference>
<dbReference type="PANTHER" id="PTHR11465:SF61">
    <property type="entry name" value="CATALASE"/>
    <property type="match status" value="1"/>
</dbReference>
<dbReference type="Pfam" id="PF00199">
    <property type="entry name" value="Catalase"/>
    <property type="match status" value="1"/>
</dbReference>
<dbReference type="Pfam" id="PF06628">
    <property type="entry name" value="Catalase-rel"/>
    <property type="match status" value="1"/>
</dbReference>
<dbReference type="PIRSF" id="PIRSF038928">
    <property type="entry name" value="Catalase_clade1-3"/>
    <property type="match status" value="1"/>
</dbReference>
<dbReference type="PRINTS" id="PR00067">
    <property type="entry name" value="CATALASE"/>
</dbReference>
<dbReference type="SMART" id="SM01060">
    <property type="entry name" value="Catalase"/>
    <property type="match status" value="1"/>
</dbReference>
<dbReference type="SUPFAM" id="SSF56634">
    <property type="entry name" value="Heme-dependent catalase-like"/>
    <property type="match status" value="1"/>
</dbReference>
<dbReference type="PROSITE" id="PS00437">
    <property type="entry name" value="CATALASE_1"/>
    <property type="match status" value="1"/>
</dbReference>
<dbReference type="PROSITE" id="PS00438">
    <property type="entry name" value="CATALASE_2"/>
    <property type="match status" value="1"/>
</dbReference>
<dbReference type="PROSITE" id="PS51402">
    <property type="entry name" value="CATALASE_3"/>
    <property type="match status" value="1"/>
</dbReference>
<sequence>MSSQCPFSHLAATNLTMGNGAPVADNQNSLTAGPRGPLLAQDLWLNEKLADFVREVIPERRMHAKGSGAFGTFTVTHDITKYTRAKIFSEVGKKTEMFARFTTVAGERGAADAERDIRGFALKFYTEEGNWDLVGNNTPVFFLRDPRKFPDLNKAVKRDPRTNMRSATNNWDFWTLLPEALHQVTVVMSDRGIPASYRHMHGFGSHTYSFWNEAGERFWVKFHFRTQQGIKNLTDAEAAEIIANDRESHQRDLYEAIERGDFPKWTLFVQIMPEADAEKVPYHPFDLTKVWSKKDYPLIEVGEFELNRNPENFFADVEQSAFAPSNLVPGIGASPDRMLQARLFNYADAQRYRLGVNYRQIPVNRPRCPVHSNQRDGQGRVDGNYGSLPHYEPNSFSQWQQQPDFAEPPLRINGDAAHWDYRNDDNDYFSQPRALFNLMNAEQKQSLFNNTAAAMGDAPDFIKYRHIRNCHWCDAAYGEGVAKALGLTVEDALKARDTDPALGQGGLL</sequence>
<feature type="chain" id="PRO_0000084986" description="Catalase">
    <location>
        <begin position="1"/>
        <end position="508"/>
    </location>
</feature>
<feature type="active site" evidence="2">
    <location>
        <position position="63"/>
    </location>
</feature>
<feature type="active site" evidence="2">
    <location>
        <position position="136"/>
    </location>
</feature>
<feature type="binding site" description="axial binding residue" evidence="1">
    <location>
        <position position="346"/>
    </location>
    <ligand>
        <name>heme</name>
        <dbReference type="ChEBI" id="CHEBI:30413"/>
    </ligand>
    <ligandPart>
        <name>Fe</name>
        <dbReference type="ChEBI" id="CHEBI:18248"/>
    </ligandPart>
</feature>
<feature type="sequence conflict" description="In Ref. 1; AAA20441." evidence="3" ref="1">
    <original>N</original>
    <variation>C</variation>
    <location>
        <position position="357"/>
    </location>
</feature>
<feature type="sequence conflict" description="In Ref. 1; AAA20441." evidence="3" ref="1">
    <original>N</original>
    <variation>T</variation>
    <location>
        <position position="384"/>
    </location>
</feature>
<feature type="sequence conflict" description="In Ref. 1; AAA20441." evidence="3" ref="1">
    <original>N</original>
    <variation>S</variation>
    <location>
        <position position="413"/>
    </location>
</feature>
<feature type="sequence conflict" description="In Ref. 1; AAA20441." evidence="3" ref="1">
    <original>N</original>
    <variation>T</variation>
    <location>
        <position position="423"/>
    </location>
</feature>